<name>CPGS_METFV</name>
<organism>
    <name type="scientific">Methanothermus fervidus (strain ATCC 43054 / DSM 2088 / JCM 10308 / V24 S)</name>
    <dbReference type="NCBI Taxonomy" id="523846"/>
    <lineage>
        <taxon>Archaea</taxon>
        <taxon>Methanobacteriati</taxon>
        <taxon>Methanobacteriota</taxon>
        <taxon>Methanomada group</taxon>
        <taxon>Methanobacteria</taxon>
        <taxon>Methanobacteriales</taxon>
        <taxon>Methanothermaceae</taxon>
        <taxon>Methanothermus</taxon>
    </lineage>
</organism>
<proteinExistence type="evidence at protein level"/>
<evidence type="ECO:0000250" key="1"/>
<evidence type="ECO:0000269" key="2">
    <source>
    </source>
</evidence>
<evidence type="ECO:0000269" key="3">
    <source>
    </source>
</evidence>
<evidence type="ECO:0000305" key="4"/>
<evidence type="ECO:0000305" key="5">
    <source>
    </source>
</evidence>
<gene>
    <name type="primary">cpgS</name>
    <name type="ordered locus">Mfer_0077</name>
</gene>
<accession>O93732</accession>
<accession>E3GWZ2</accession>
<dbReference type="EC" id="6.5.1.9" evidence="2"/>
<dbReference type="EMBL" id="Y09856">
    <property type="protein sequence ID" value="CAA70986.1"/>
    <property type="molecule type" value="Genomic_DNA"/>
</dbReference>
<dbReference type="EMBL" id="CP002278">
    <property type="protein sequence ID" value="ADP76881.1"/>
    <property type="molecule type" value="Genomic_DNA"/>
</dbReference>
<dbReference type="PDB" id="8ORK">
    <property type="method" value="X-ray"/>
    <property type="resolution" value="1.64 A"/>
    <property type="chains" value="AAA=1-460"/>
</dbReference>
<dbReference type="PDB" id="8ORU">
    <property type="method" value="X-ray"/>
    <property type="resolution" value="2.23 A"/>
    <property type="chains" value="AAA/BBB/CCC/DDD=2-460"/>
</dbReference>
<dbReference type="PDBsum" id="8ORK"/>
<dbReference type="PDBsum" id="8ORU"/>
<dbReference type="SMR" id="O93732"/>
<dbReference type="STRING" id="523846.Mfer_0077"/>
<dbReference type="KEGG" id="mfv:Mfer_0077"/>
<dbReference type="HOGENOM" id="CLU_638764_0_0_2"/>
<dbReference type="OrthoDB" id="85545at2157"/>
<dbReference type="BioCyc" id="MetaCyc:MONOMER-20994"/>
<dbReference type="BRENDA" id="6.5.1.9">
    <property type="organism ID" value="3286"/>
</dbReference>
<dbReference type="SABIO-RK" id="O93732"/>
<dbReference type="Proteomes" id="UP000002315">
    <property type="component" value="Chromosome"/>
</dbReference>
<dbReference type="GO" id="GO:0005737">
    <property type="term" value="C:cytoplasm"/>
    <property type="evidence" value="ECO:0007669"/>
    <property type="project" value="UniProtKB-SubCell"/>
</dbReference>
<dbReference type="GO" id="GO:0005524">
    <property type="term" value="F:ATP binding"/>
    <property type="evidence" value="ECO:0007669"/>
    <property type="project" value="UniProtKB-KW"/>
</dbReference>
<dbReference type="GO" id="GO:0036356">
    <property type="term" value="F:cyclic 2,3-diphosphoglycerate synthetase activity"/>
    <property type="evidence" value="ECO:0007669"/>
    <property type="project" value="InterPro"/>
</dbReference>
<dbReference type="GO" id="GO:0016874">
    <property type="term" value="F:ligase activity"/>
    <property type="evidence" value="ECO:0007669"/>
    <property type="project" value="UniProtKB-UniRule"/>
</dbReference>
<dbReference type="GO" id="GO:0006094">
    <property type="term" value="P:gluconeogenesis"/>
    <property type="evidence" value="ECO:0007669"/>
    <property type="project" value="InterPro"/>
</dbReference>
<dbReference type="HAMAP" id="MF_01908">
    <property type="entry name" value="Cyc_PG_syn"/>
    <property type="match status" value="1"/>
</dbReference>
<dbReference type="InterPro" id="IPR016557">
    <property type="entry name" value="Cyc_diphosphoglycerate_synth"/>
</dbReference>
<dbReference type="PIRSF" id="PIRSF009445">
    <property type="entry name" value="Cyc_PG_syn"/>
    <property type="match status" value="1"/>
</dbReference>
<protein>
    <recommendedName>
        <fullName>Cyclic 2,3-diphosphoglycerate synthetase</fullName>
        <shortName>cDPGS</shortName>
        <ecNumber evidence="2">6.5.1.9</ecNumber>
    </recommendedName>
</protein>
<reference key="1">
    <citation type="journal article" date="1998" name="J. Bacteriol.">
        <title>Cloning, sequencing, and expression of the gene encoding cyclic 2,3-diphosphoglycerate synthetase, the key enzyme of cyclic 2,3-diphosphoglycerate metabolism in Methanothermus fervidus.</title>
        <authorList>
            <person name="Matussek K."/>
            <person name="Moritz P."/>
            <person name="Brunner N."/>
            <person name="Eckerskorn C."/>
            <person name="Hensel R."/>
        </authorList>
    </citation>
    <scope>NUCLEOTIDE SEQUENCE [GENOMIC DNA]</scope>
    <scope>PROTEIN SEQUENCE OF 2-21</scope>
    <scope>FUNCTION</scope>
    <scope>BIOPHYSICOCHEMICAL PROPERTIES</scope>
    <scope>SUBUNIT</scope>
    <scope>MASS SPECTROMETRY</scope>
    <source>
        <strain>ATCC 43054 / DSM 2088 / JCM 10308 / V24 S</strain>
    </source>
</reference>
<reference key="2">
    <citation type="journal article" date="2010" name="Stand. Genomic Sci.">
        <title>Complete genome sequence of Methanothermus fervidus type strain (V24S).</title>
        <authorList>
            <person name="Anderson I."/>
            <person name="Djao O.D."/>
            <person name="Misra M."/>
            <person name="Chertkov O."/>
            <person name="Nolan M."/>
            <person name="Lucas S."/>
            <person name="Lapidus A."/>
            <person name="Del Rio T.G."/>
            <person name="Tice H."/>
            <person name="Cheng J.F."/>
            <person name="Tapia R."/>
            <person name="Han C."/>
            <person name="Goodwin L."/>
            <person name="Pitluck S."/>
            <person name="Liolios K."/>
            <person name="Ivanova N."/>
            <person name="Mavromatis K."/>
            <person name="Mikhailova N."/>
            <person name="Pati A."/>
            <person name="Brambilla E."/>
            <person name="Chen A."/>
            <person name="Palaniappan K."/>
            <person name="Land M."/>
            <person name="Hauser L."/>
            <person name="Chang Y.J."/>
            <person name="Jeffries C.D."/>
            <person name="Sikorski J."/>
            <person name="Spring S."/>
            <person name="Rohde M."/>
            <person name="Eichinger K."/>
            <person name="Huber H."/>
            <person name="Wirth R."/>
            <person name="Goker M."/>
            <person name="Detter J.C."/>
            <person name="Woyke T."/>
            <person name="Bristow J."/>
            <person name="Eisen J.A."/>
            <person name="Markowitz V."/>
            <person name="Hugenholtz P."/>
            <person name="Klenk H.P."/>
            <person name="Kyrpides N.C."/>
        </authorList>
    </citation>
    <scope>NUCLEOTIDE SEQUENCE [LARGE SCALE GENOMIC DNA]</scope>
    <source>
        <strain>ATCC 43054 / DSM 2088 / JCM 10308 / V24 S</strain>
    </source>
</reference>
<reference key="3">
    <citation type="journal article" date="1990" name="FEBS Lett.">
        <title>Biosynthesis of cyclic 2,3-diphosphoglycerate. Isolation and characterization of 2-phosphoglycerate kinase and cyclic 2,3-diphosphoglycerate synthetase from Methanothermus fervidus.</title>
        <authorList>
            <person name="Lehmacher A."/>
            <person name="Vogt A.-B."/>
            <person name="Hensel R."/>
        </authorList>
    </citation>
    <scope>FUNCTION</scope>
    <scope>CATALYTIC ACTIVITY</scope>
    <scope>BIOPHYSICOCHEMICAL PROPERTIES</scope>
    <source>
        <strain>ATCC 43054 / DSM 2088 / JCM 10308 / V24 S</strain>
    </source>
</reference>
<feature type="initiator methionine" description="Removed" evidence="3">
    <location>
        <position position="1"/>
    </location>
</feature>
<feature type="chain" id="PRO_0000313693" description="Cyclic 2,3-diphosphoglycerate synthetase">
    <location>
        <begin position="2"/>
        <end position="460"/>
    </location>
</feature>
<keyword id="KW-0002">3D-structure</keyword>
<keyword id="KW-0067">ATP-binding</keyword>
<keyword id="KW-0963">Cytoplasm</keyword>
<keyword id="KW-0903">Direct protein sequencing</keyword>
<keyword id="KW-0436">Ligase</keyword>
<keyword id="KW-0547">Nucleotide-binding</keyword>
<keyword id="KW-1185">Reference proteome</keyword>
<sequence>MGETKKMICLVDGEHYFPVVKDSIEILDDLEHIDVVAVVFIGGTEKLQIEDPKEYSEKLGKPVFFGPDPKKIPYDVIKKCVKKYNADIVMDLSDEPVVDYTKRFRIASIVLKEGAVYQGADFKFEPLTEYDVLEKPSIKIIGTGKRIGKTAVSAYAARVIHKHKYNPCVVAMGRGGPREPEIVEGNKIEITAEYLLEQADKGVHAASDHWEDALMSRILTVGCRRCGGGMLGDTFITNVKRGAEIANKLDSDFVIMEGSGAAIPPVKTNRQIVTVGANQPMININNFFGPFRIGLADLVIITMCEEPMATTEKIKKVEKFIKEINPSANVIPTVFRPKPVGNVEGKKVLFATTAPKVVVGKLVNYLESKYGCDVVGVTPHLSNRPLLRRDLKKYINKADLMLTELKAAAVDVATRVAIEAGLDVVYCDNIPVVIDESYGNIDDAIIEVVEMAIDDFKNNR</sequence>
<comment type="function">
    <text evidence="2 3">Catalyzes the formation of cyclic 2,3-diphosphoglycerate (cDPG) by formation of an intramolecular phosphoanhydride bond at the expense of ATP. It is also able to catalyze the hydrolysis of cDPG but with significant slower rates (8-10 times). May be involved in thermoadaptation.</text>
</comment>
<comment type="catalytic activity">
    <reaction evidence="2">
        <text>(2R)-2,3-bisphosphoglycerate + ATP + H(+) = cyclic (2R)-2,3-bisphosphoglycerate + ADP + phosphate</text>
        <dbReference type="Rhea" id="RHEA:42412"/>
        <dbReference type="ChEBI" id="CHEBI:15378"/>
        <dbReference type="ChEBI" id="CHEBI:30616"/>
        <dbReference type="ChEBI" id="CHEBI:43474"/>
        <dbReference type="ChEBI" id="CHEBI:58248"/>
        <dbReference type="ChEBI" id="CHEBI:79081"/>
        <dbReference type="ChEBI" id="CHEBI:456216"/>
        <dbReference type="EC" id="6.5.1.9"/>
    </reaction>
</comment>
<comment type="biophysicochemical properties">
    <kinetics>
        <KM evidence="2 3">3 mM for ATP (at pH 7.0 and 83 degrees Celsius)</KM>
        <KM evidence="2 3">5.8 mM for 2,3 diphosphoglycerate (at pH 7.0 and 83 degrees Celsius)</KM>
        <KM evidence="2 3">4.7 mM for ADP (at pH 7.0 and 83 degrees Celsius)</KM>
        <KM evidence="2 3">41.2 mM for cyclic 2,3-diphosphoglycerate (at pH 7.0 and 83 degrees Celsius)</KM>
        <Vmax evidence="2 3">32.0 umol/min/mg enzyme for cDPG synthesis (at pH 7.0 and 83 degrees Celsius)</Vmax>
        <Vmax evidence="2 3">4.0 umol/min/mg enzyme for cDPG hydrolysis (at pH 7.0 and 83 degrees Celsius)</Vmax>
    </kinetics>
    <phDependence>
        <text evidence="2 3">Optimum pH is 5.0-7.5.</text>
    </phDependence>
    <temperatureDependence>
        <text evidence="2 3">Optimum temperature is 75-80 degrees Celsius.</text>
    </temperatureDependence>
</comment>
<comment type="subunit">
    <text evidence="5">Homodimer.</text>
</comment>
<comment type="subcellular location">
    <subcellularLocation>
        <location evidence="1">Cytoplasm</location>
    </subcellularLocation>
</comment>
<comment type="mass spectrometry"/>
<comment type="similarity">
    <text evidence="4">Belongs to the cyclic 2,3-diphosphoglycerate synthetase family.</text>
</comment>